<name>MDV1_SCLS1</name>
<organism>
    <name type="scientific">Sclerotinia sclerotiorum (strain ATCC 18683 / 1980 / Ss-1)</name>
    <name type="common">White mold</name>
    <name type="synonym">Whetzelinia sclerotiorum</name>
    <dbReference type="NCBI Taxonomy" id="665079"/>
    <lineage>
        <taxon>Eukaryota</taxon>
        <taxon>Fungi</taxon>
        <taxon>Dikarya</taxon>
        <taxon>Ascomycota</taxon>
        <taxon>Pezizomycotina</taxon>
        <taxon>Leotiomycetes</taxon>
        <taxon>Helotiales</taxon>
        <taxon>Sclerotiniaceae</taxon>
        <taxon>Sclerotinia</taxon>
    </lineage>
</organism>
<dbReference type="EMBL" id="CH476631">
    <property type="protein sequence ID" value="EDN92705.1"/>
    <property type="molecule type" value="Genomic_DNA"/>
</dbReference>
<dbReference type="RefSeq" id="XP_001590828.1">
    <property type="nucleotide sequence ID" value="XM_001590778.1"/>
</dbReference>
<dbReference type="SMR" id="A7ETB3"/>
<dbReference type="FunCoup" id="A7ETB3">
    <property type="interactions" value="75"/>
</dbReference>
<dbReference type="STRING" id="665079.A7ETB3"/>
<dbReference type="EnsemblFungi" id="EDN92705">
    <property type="protein sequence ID" value="EDN92705"/>
    <property type="gene ID" value="SS1G_08568"/>
</dbReference>
<dbReference type="GeneID" id="5486691"/>
<dbReference type="KEGG" id="ssl:SS1G_08568"/>
<dbReference type="eggNOG" id="KOG4155">
    <property type="taxonomic scope" value="Eukaryota"/>
</dbReference>
<dbReference type="HOGENOM" id="CLU_012350_1_1_1"/>
<dbReference type="InParanoid" id="A7ETB3"/>
<dbReference type="OMA" id="ERLRYMD"/>
<dbReference type="Proteomes" id="UP000001312">
    <property type="component" value="Unassembled WGS sequence"/>
</dbReference>
<dbReference type="GO" id="GO:0005741">
    <property type="term" value="C:mitochondrial outer membrane"/>
    <property type="evidence" value="ECO:0007669"/>
    <property type="project" value="UniProtKB-SubCell"/>
</dbReference>
<dbReference type="GO" id="GO:0005739">
    <property type="term" value="C:mitochondrion"/>
    <property type="evidence" value="ECO:0000318"/>
    <property type="project" value="GO_Central"/>
</dbReference>
<dbReference type="GO" id="GO:0000266">
    <property type="term" value="P:mitochondrial fission"/>
    <property type="evidence" value="ECO:0000318"/>
    <property type="project" value="GO_Central"/>
</dbReference>
<dbReference type="GO" id="GO:0016559">
    <property type="term" value="P:peroxisome fission"/>
    <property type="evidence" value="ECO:0000318"/>
    <property type="project" value="GO_Central"/>
</dbReference>
<dbReference type="CDD" id="cd22881">
    <property type="entry name" value="Mdv1_N"/>
    <property type="match status" value="1"/>
</dbReference>
<dbReference type="CDD" id="cd00200">
    <property type="entry name" value="WD40"/>
    <property type="match status" value="1"/>
</dbReference>
<dbReference type="FunFam" id="2.130.10.10:FF:000404">
    <property type="entry name" value="Mitochondrial division protein 1"/>
    <property type="match status" value="1"/>
</dbReference>
<dbReference type="FunFam" id="2.130.10.10:FF:002118">
    <property type="entry name" value="Mitochondrial division protein 1"/>
    <property type="match status" value="1"/>
</dbReference>
<dbReference type="Gene3D" id="6.10.280.220">
    <property type="match status" value="1"/>
</dbReference>
<dbReference type="Gene3D" id="2.130.10.10">
    <property type="entry name" value="YVTN repeat-like/Quinoprotein amine dehydrogenase"/>
    <property type="match status" value="2"/>
</dbReference>
<dbReference type="InterPro" id="IPR020472">
    <property type="entry name" value="G-protein_beta_WD-40_rep"/>
</dbReference>
<dbReference type="InterPro" id="IPR015943">
    <property type="entry name" value="WD40/YVTN_repeat-like_dom_sf"/>
</dbReference>
<dbReference type="InterPro" id="IPR019775">
    <property type="entry name" value="WD40_repeat_CS"/>
</dbReference>
<dbReference type="InterPro" id="IPR036322">
    <property type="entry name" value="WD40_repeat_dom_sf"/>
</dbReference>
<dbReference type="InterPro" id="IPR001680">
    <property type="entry name" value="WD40_rpt"/>
</dbReference>
<dbReference type="PANTHER" id="PTHR19855:SF28">
    <property type="entry name" value="CCR4-ASSOCIATED FACTOR 4"/>
    <property type="match status" value="1"/>
</dbReference>
<dbReference type="PANTHER" id="PTHR19855">
    <property type="entry name" value="WD40 REPEAT PROTEIN 12, 37"/>
    <property type="match status" value="1"/>
</dbReference>
<dbReference type="Pfam" id="PF00400">
    <property type="entry name" value="WD40"/>
    <property type="match status" value="4"/>
</dbReference>
<dbReference type="PRINTS" id="PR00320">
    <property type="entry name" value="GPROTEINBRPT"/>
</dbReference>
<dbReference type="SMART" id="SM00320">
    <property type="entry name" value="WD40"/>
    <property type="match status" value="6"/>
</dbReference>
<dbReference type="SUPFAM" id="SSF50978">
    <property type="entry name" value="WD40 repeat-like"/>
    <property type="match status" value="1"/>
</dbReference>
<dbReference type="PROSITE" id="PS00678">
    <property type="entry name" value="WD_REPEATS_1"/>
    <property type="match status" value="3"/>
</dbReference>
<dbReference type="PROSITE" id="PS50082">
    <property type="entry name" value="WD_REPEATS_2"/>
    <property type="match status" value="5"/>
</dbReference>
<dbReference type="PROSITE" id="PS50294">
    <property type="entry name" value="WD_REPEATS_REGION"/>
    <property type="match status" value="1"/>
</dbReference>
<gene>
    <name type="primary">mdv1</name>
    <name type="ORF">SS1G_08568</name>
</gene>
<evidence type="ECO:0000250" key="1"/>
<evidence type="ECO:0000255" key="2"/>
<evidence type="ECO:0000256" key="3">
    <source>
        <dbReference type="SAM" id="MobiDB-lite"/>
    </source>
</evidence>
<evidence type="ECO:0000305" key="4"/>
<keyword id="KW-0175">Coiled coil</keyword>
<keyword id="KW-0472">Membrane</keyword>
<keyword id="KW-0496">Mitochondrion</keyword>
<keyword id="KW-1000">Mitochondrion outer membrane</keyword>
<keyword id="KW-1185">Reference proteome</keyword>
<keyword id="KW-0677">Repeat</keyword>
<keyword id="KW-0853">WD repeat</keyword>
<feature type="chain" id="PRO_0000330111" description="Mitochondrial division protein 1">
    <location>
        <begin position="1"/>
        <end position="667"/>
    </location>
</feature>
<feature type="repeat" description="WD 1">
    <location>
        <begin position="319"/>
        <end position="360"/>
    </location>
</feature>
<feature type="repeat" description="WD 2">
    <location>
        <begin position="361"/>
        <end position="398"/>
    </location>
</feature>
<feature type="repeat" description="WD 3">
    <location>
        <begin position="442"/>
        <end position="481"/>
    </location>
</feature>
<feature type="repeat" description="WD 4">
    <location>
        <begin position="501"/>
        <end position="546"/>
    </location>
</feature>
<feature type="repeat" description="WD 5">
    <location>
        <begin position="549"/>
        <end position="586"/>
    </location>
</feature>
<feature type="repeat" description="WD 6">
    <location>
        <begin position="588"/>
        <end position="625"/>
    </location>
</feature>
<feature type="repeat" description="WD 7">
    <location>
        <begin position="628"/>
        <end position="666"/>
    </location>
</feature>
<feature type="region of interest" description="Disordered" evidence="3">
    <location>
        <begin position="1"/>
        <end position="20"/>
    </location>
</feature>
<feature type="region of interest" description="Disordered" evidence="3">
    <location>
        <begin position="131"/>
        <end position="167"/>
    </location>
</feature>
<feature type="region of interest" description="Disordered" evidence="3">
    <location>
        <begin position="276"/>
        <end position="295"/>
    </location>
</feature>
<feature type="coiled-coil region" evidence="2">
    <location>
        <begin position="166"/>
        <end position="253"/>
    </location>
</feature>
<feature type="compositionally biased region" description="Polar residues" evidence="3">
    <location>
        <begin position="1"/>
        <end position="11"/>
    </location>
</feature>
<feature type="compositionally biased region" description="Basic residues" evidence="3">
    <location>
        <begin position="137"/>
        <end position="147"/>
    </location>
</feature>
<protein>
    <recommendedName>
        <fullName>Mitochondrial division protein 1</fullName>
    </recommendedName>
</protein>
<proteinExistence type="inferred from homology"/>
<sequence>MAGSSSRNASSFGAEEDEDGALISTRGLEAFGRKVTTTAGHLIGPIDPTSSTHYQNAMSDLHKQLRRPNLQRSVFSFAKTTPTDLVRSKLSTSEIQYRALTFLPDELLRNIPENENSYSLFQGFQASLPEAGEEKGKKHRRRISRGRKLIDNASEGGSEGDGPPSVAKLKKEKEALNHRLEMMGIRKNMASSEIHGIDNKIANLNSMRRIVLDRLAGLEQEESMLEHENVENRLEEAQEQIEDAEALGKSIVGAEEGDDVENSGMESSFMSESIYEKLPSSASTSSSKGSRRHKTIRRKSMPILHEHFEPGSSIREIQAHDDMVTALDFDVPFGTMVSSALDDTVRVWDMNAGRCMGLLEGHTASVRTLQVEDNIVATGSMDATIRLWDLSKARYDPQDKIKEEQEEGEEDQLAFGEALEREQQTHIPQGTMQDCPLFTLEAHVDEVTALHFRGDTLISGSADKTLRQWDLEKGRCVQTLDVMWAAAQASATMGSTEGTWRQTGRLPDATADFVGAVQVFDAALACGTADGMVRLWDLRSGQVHRSLVGHTGPVTCLQFDDVHLVTGSLDRSIRIWDLRTGAIYDAYAYDAPITSMMFDTRRIVAAAGEDMVKVYDKTDGRHWDCGIGAQREASEEMVERNIIEKCRVKDGYMVEGRRSGMVGIWSC</sequence>
<reference key="1">
    <citation type="journal article" date="2011" name="PLoS Genet.">
        <title>Genomic analysis of the necrotrophic fungal pathogens Sclerotinia sclerotiorum and Botrytis cinerea.</title>
        <authorList>
            <person name="Amselem J."/>
            <person name="Cuomo C.A."/>
            <person name="van Kan J.A.L."/>
            <person name="Viaud M."/>
            <person name="Benito E.P."/>
            <person name="Couloux A."/>
            <person name="Coutinho P.M."/>
            <person name="de Vries R.P."/>
            <person name="Dyer P.S."/>
            <person name="Fillinger S."/>
            <person name="Fournier E."/>
            <person name="Gout L."/>
            <person name="Hahn M."/>
            <person name="Kohn L."/>
            <person name="Lapalu N."/>
            <person name="Plummer K.M."/>
            <person name="Pradier J.-M."/>
            <person name="Quevillon E."/>
            <person name="Sharon A."/>
            <person name="Simon A."/>
            <person name="ten Have A."/>
            <person name="Tudzynski B."/>
            <person name="Tudzynski P."/>
            <person name="Wincker P."/>
            <person name="Andrew M."/>
            <person name="Anthouard V."/>
            <person name="Beever R.E."/>
            <person name="Beffa R."/>
            <person name="Benoit I."/>
            <person name="Bouzid O."/>
            <person name="Brault B."/>
            <person name="Chen Z."/>
            <person name="Choquer M."/>
            <person name="Collemare J."/>
            <person name="Cotton P."/>
            <person name="Danchin E.G."/>
            <person name="Da Silva C."/>
            <person name="Gautier A."/>
            <person name="Giraud C."/>
            <person name="Giraud T."/>
            <person name="Gonzalez C."/>
            <person name="Grossetete S."/>
            <person name="Gueldener U."/>
            <person name="Henrissat B."/>
            <person name="Howlett B.J."/>
            <person name="Kodira C."/>
            <person name="Kretschmer M."/>
            <person name="Lappartient A."/>
            <person name="Leroch M."/>
            <person name="Levis C."/>
            <person name="Mauceli E."/>
            <person name="Neuveglise C."/>
            <person name="Oeser B."/>
            <person name="Pearson M."/>
            <person name="Poulain J."/>
            <person name="Poussereau N."/>
            <person name="Quesneville H."/>
            <person name="Rascle C."/>
            <person name="Schumacher J."/>
            <person name="Segurens B."/>
            <person name="Sexton A."/>
            <person name="Silva E."/>
            <person name="Sirven C."/>
            <person name="Soanes D.M."/>
            <person name="Talbot N.J."/>
            <person name="Templeton M."/>
            <person name="Yandava C."/>
            <person name="Yarden O."/>
            <person name="Zeng Q."/>
            <person name="Rollins J.A."/>
            <person name="Lebrun M.-H."/>
            <person name="Dickman M."/>
        </authorList>
    </citation>
    <scope>NUCLEOTIDE SEQUENCE [LARGE SCALE GENOMIC DNA]</scope>
    <source>
        <strain>ATCC 18683 / 1980 / Ss-1</strain>
    </source>
</reference>
<accession>A7ETB3</accession>
<comment type="function">
    <text evidence="1">Involved in mitochondrial fission. Acts as an adapter protein required to form mitochondrial fission complexes. Formation of these complexes is required to promote constriction and fission of the mitochondrial compartment at a late step in mitochondrial division (By similarity).</text>
</comment>
<comment type="subcellular location">
    <subcellularLocation>
        <location evidence="1">Mitochondrion outer membrane</location>
        <topology evidence="1">Peripheral membrane protein</topology>
        <orientation evidence="1">Cytoplasmic side</orientation>
    </subcellularLocation>
</comment>
<comment type="similarity">
    <text evidence="4">Belongs to the WD repeat MDV1/CAF4 family.</text>
</comment>